<accession>E0SNQ8</accession>
<dbReference type="EC" id="5.4.99.25" evidence="1"/>
<dbReference type="EMBL" id="CP002098">
    <property type="protein sequence ID" value="ADM27854.1"/>
    <property type="molecule type" value="Genomic_DNA"/>
</dbReference>
<dbReference type="SMR" id="E0SNQ8"/>
<dbReference type="STRING" id="583356.Igag_1040"/>
<dbReference type="KEGG" id="iag:Igag_1040"/>
<dbReference type="HOGENOM" id="CLU_028780_2_0_2"/>
<dbReference type="Proteomes" id="UP000001304">
    <property type="component" value="Chromosome"/>
</dbReference>
<dbReference type="GO" id="GO:0000049">
    <property type="term" value="F:tRNA binding"/>
    <property type="evidence" value="ECO:0007669"/>
    <property type="project" value="InterPro"/>
</dbReference>
<dbReference type="GO" id="GO:0160148">
    <property type="term" value="F:tRNA pseudouridine(55) synthase activity"/>
    <property type="evidence" value="ECO:0007669"/>
    <property type="project" value="UniProtKB-EC"/>
</dbReference>
<dbReference type="GO" id="GO:0031119">
    <property type="term" value="P:tRNA pseudouridine synthesis"/>
    <property type="evidence" value="ECO:0007669"/>
    <property type="project" value="UniProtKB-UniRule"/>
</dbReference>
<dbReference type="Gene3D" id="3.30.70.2510">
    <property type="match status" value="1"/>
</dbReference>
<dbReference type="Gene3D" id="3.30.70.3190">
    <property type="match status" value="1"/>
</dbReference>
<dbReference type="HAMAP" id="MF_01893">
    <property type="entry name" value="Pus10_arch"/>
    <property type="match status" value="1"/>
</dbReference>
<dbReference type="InterPro" id="IPR020103">
    <property type="entry name" value="PsdUridine_synth_cat_dom_sf"/>
</dbReference>
<dbReference type="InterPro" id="IPR005912">
    <property type="entry name" value="Pus10"/>
</dbReference>
<dbReference type="InterPro" id="IPR039894">
    <property type="entry name" value="Pus10-like"/>
</dbReference>
<dbReference type="InterPro" id="IPR048741">
    <property type="entry name" value="Pus10-like_C"/>
</dbReference>
<dbReference type="InterPro" id="IPR055174">
    <property type="entry name" value="Pus10_THUMP_arc"/>
</dbReference>
<dbReference type="NCBIfam" id="TIGR01213">
    <property type="entry name" value="pseudo_Pus10arc"/>
    <property type="match status" value="1"/>
</dbReference>
<dbReference type="PANTHER" id="PTHR21568">
    <property type="entry name" value="TRNA PSEUDOURIDINE SYNTHASE PUS10"/>
    <property type="match status" value="1"/>
</dbReference>
<dbReference type="PANTHER" id="PTHR21568:SF0">
    <property type="entry name" value="TRNA PSEUDOURIDINE SYNTHASE PUS10"/>
    <property type="match status" value="1"/>
</dbReference>
<dbReference type="Pfam" id="PF21238">
    <property type="entry name" value="Pus10_C"/>
    <property type="match status" value="1"/>
</dbReference>
<dbReference type="Pfam" id="PF22023">
    <property type="entry name" value="Pus10_THUMP_arc"/>
    <property type="match status" value="1"/>
</dbReference>
<dbReference type="SUPFAM" id="SSF55120">
    <property type="entry name" value="Pseudouridine synthase"/>
    <property type="match status" value="1"/>
</dbReference>
<dbReference type="SUPFAM" id="SSF143437">
    <property type="entry name" value="THUMP domain-like"/>
    <property type="match status" value="1"/>
</dbReference>
<protein>
    <recommendedName>
        <fullName evidence="1">tRNA pseudouridine synthase Pus10</fullName>
        <ecNumber evidence="1">5.4.99.25</ecNumber>
    </recommendedName>
    <alternativeName>
        <fullName evidence="1">tRNA pseudouridine 54/55 synthase</fullName>
        <shortName evidence="1">Psi54/55 synthase</shortName>
    </alternativeName>
</protein>
<name>PUS10_IGNAA</name>
<evidence type="ECO:0000255" key="1">
    <source>
        <dbReference type="HAMAP-Rule" id="MF_01893"/>
    </source>
</evidence>
<feature type="chain" id="PRO_0000407386" description="tRNA pseudouridine synthase Pus10">
    <location>
        <begin position="1"/>
        <end position="430"/>
    </location>
</feature>
<feature type="active site" description="Nucleophile" evidence="1">
    <location>
        <position position="253"/>
    </location>
</feature>
<feature type="binding site" evidence="1">
    <location>
        <position position="320"/>
    </location>
    <ligand>
        <name>substrate</name>
    </ligand>
</feature>
<feature type="binding site" evidence="1">
    <location>
        <position position="392"/>
    </location>
    <ligand>
        <name>substrate</name>
    </ligand>
</feature>
<organism>
    <name type="scientific">Ignisphaera aggregans (strain DSM 17230 / JCM 13409 / AQ1.S1)</name>
    <dbReference type="NCBI Taxonomy" id="583356"/>
    <lineage>
        <taxon>Archaea</taxon>
        <taxon>Thermoproteota</taxon>
        <taxon>Thermoprotei</taxon>
        <taxon>Desulfurococcales</taxon>
        <taxon>Desulfurococcaceae</taxon>
        <taxon>Ignisphaera</taxon>
    </lineage>
</organism>
<comment type="function">
    <text evidence="1">Responsible for synthesis of pseudouridine from uracil-54 and uracil-55 in the psi GC loop of transfer RNAs.</text>
</comment>
<comment type="catalytic activity">
    <reaction evidence="1">
        <text>uridine(54) in tRNA = pseudouridine(54) in tRNA</text>
        <dbReference type="Rhea" id="RHEA:57876"/>
        <dbReference type="Rhea" id="RHEA-COMP:10193"/>
        <dbReference type="Rhea" id="RHEA-COMP:14141"/>
        <dbReference type="ChEBI" id="CHEBI:65314"/>
        <dbReference type="ChEBI" id="CHEBI:65315"/>
    </reaction>
</comment>
<comment type="catalytic activity">
    <reaction evidence="1">
        <text>uridine(55) in tRNA = pseudouridine(55) in tRNA</text>
        <dbReference type="Rhea" id="RHEA:42532"/>
        <dbReference type="Rhea" id="RHEA-COMP:10101"/>
        <dbReference type="Rhea" id="RHEA-COMP:10102"/>
        <dbReference type="ChEBI" id="CHEBI:65314"/>
        <dbReference type="ChEBI" id="CHEBI:65315"/>
        <dbReference type="EC" id="5.4.99.25"/>
    </reaction>
</comment>
<comment type="similarity">
    <text evidence="1">Belongs to the pseudouridine synthase Pus10 family.</text>
</comment>
<proteinExistence type="inferred from homology"/>
<gene>
    <name evidence="1" type="primary">pus10</name>
    <name type="ordered locus">Igag_1040</name>
</gene>
<keyword id="KW-0413">Isomerase</keyword>
<keyword id="KW-1185">Reference proteome</keyword>
<keyword id="KW-0694">RNA-binding</keyword>
<keyword id="KW-0819">tRNA processing</keyword>
<reference key="1">
    <citation type="journal article" date="2010" name="Stand. Genomic Sci.">
        <title>Complete genome sequence of Ignisphaera aggregans type strain (AQ1.S1).</title>
        <authorList>
            <person name="Goker M."/>
            <person name="Held B."/>
            <person name="Lapidus A."/>
            <person name="Nolan M."/>
            <person name="Spring S."/>
            <person name="Yasawong M."/>
            <person name="Lucas S."/>
            <person name="Glavina Del Rio T."/>
            <person name="Tice H."/>
            <person name="Cheng J.F."/>
            <person name="Goodwin L."/>
            <person name="Tapia R."/>
            <person name="Pitluck S."/>
            <person name="Liolios K."/>
            <person name="Ivanova N."/>
            <person name="Mavromatis K."/>
            <person name="Mikhailova N."/>
            <person name="Pati A."/>
            <person name="Chen A."/>
            <person name="Palaniappan K."/>
            <person name="Brambilla E."/>
            <person name="Land M."/>
            <person name="Hauser L."/>
            <person name="Chang Y.J."/>
            <person name="Jeffries C.D."/>
            <person name="Brettin T."/>
            <person name="Detter J.C."/>
            <person name="Han C."/>
            <person name="Rohde M."/>
            <person name="Sikorski J."/>
            <person name="Woyke T."/>
            <person name="Bristow J."/>
            <person name="Eisen J.A."/>
            <person name="Markowitz V."/>
            <person name="Hugenholtz P."/>
            <person name="Kyrpides N.C."/>
            <person name="Klenk H.P."/>
        </authorList>
    </citation>
    <scope>NUCLEOTIDE SEQUENCE [LARGE SCALE GENOMIC DNA]</scope>
    <source>
        <strain>DSM 17230 / JCM 13409 / AQ1.S1</strain>
    </source>
</reference>
<sequence>MSIIDIANNILRKYCLCDRCLGRLFASLGRGLSNDERGKAIKIALVLELHKRYLDGDKDSLKQLVELSPNIGPIAVNLIKNLGIEIEYTPRTCFICDNKINDIIDTYSQRIADIINERHINSFVLGIRGVTSYIRKEESIANEFKLLYWENIKRELKREIGKKIQMMTNAKVDFLNPEAMIIIDIDRDRIYIESPSLLIYGRYWKLGRMISQNIWLTKNGVKKYPLSIEEIAKMLVKDGFGDDVVLHIAGREDVDVRTLGSGRPFVLEIKRPRKRNIDIKDIENRLNSISRWLKFELNMFVDRDFVSRVKKGCRTSYKIYRAIVVADRDIGIEDIKRLEEFFRDRIIEQRTPTRVLRRKKDVLRRRKVFEIKTRVISPRVFEALIKCEGGLYVKELISGDNGRTVPSFSSVLNANTLCLTLDALYVHEYI</sequence>